<proteinExistence type="inferred from homology"/>
<reference key="1">
    <citation type="submission" date="2008-05" db="EMBL/GenBank/DDBJ databases">
        <title>Complete sequence of Chlorobium limicola DSM 245.</title>
        <authorList>
            <consortium name="US DOE Joint Genome Institute"/>
            <person name="Lucas S."/>
            <person name="Copeland A."/>
            <person name="Lapidus A."/>
            <person name="Glavina del Rio T."/>
            <person name="Dalin E."/>
            <person name="Tice H."/>
            <person name="Bruce D."/>
            <person name="Goodwin L."/>
            <person name="Pitluck S."/>
            <person name="Schmutz J."/>
            <person name="Larimer F."/>
            <person name="Land M."/>
            <person name="Hauser L."/>
            <person name="Kyrpides N."/>
            <person name="Ovchinnikova G."/>
            <person name="Zhao F."/>
            <person name="Li T."/>
            <person name="Liu Z."/>
            <person name="Overmann J."/>
            <person name="Bryant D.A."/>
            <person name="Richardson P."/>
        </authorList>
    </citation>
    <scope>NUCLEOTIDE SEQUENCE [LARGE SCALE GENOMIC DNA]</scope>
    <source>
        <strain>DSM 245 / NBRC 103803 / 6330</strain>
    </source>
</reference>
<name>RL10_CHLL2</name>
<gene>
    <name evidence="1" type="primary">rplJ</name>
    <name type="ordered locus">Clim_0194</name>
</gene>
<comment type="function">
    <text evidence="1">Forms part of the ribosomal stalk, playing a central role in the interaction of the ribosome with GTP-bound translation factors.</text>
</comment>
<comment type="subunit">
    <text evidence="1">Part of the ribosomal stalk of the 50S ribosomal subunit. The N-terminus interacts with L11 and the large rRNA to form the base of the stalk. The C-terminus forms an elongated spine to which L12 dimers bind in a sequential fashion forming a multimeric L10(L12)X complex.</text>
</comment>
<comment type="similarity">
    <text evidence="1">Belongs to the universal ribosomal protein uL10 family.</text>
</comment>
<protein>
    <recommendedName>
        <fullName evidence="1">Large ribosomal subunit protein uL10</fullName>
    </recommendedName>
    <alternativeName>
        <fullName evidence="2">50S ribosomal protein L10</fullName>
    </alternativeName>
</protein>
<keyword id="KW-0687">Ribonucleoprotein</keyword>
<keyword id="KW-0689">Ribosomal protein</keyword>
<keyword id="KW-0694">RNA-binding</keyword>
<keyword id="KW-0699">rRNA-binding</keyword>
<sequence length="172" mass="19004">MKRDKKEQVVQEVAEKIGRSQGIYLTEYQGLNVAKMAELRNEFRKAGIEYKVVKNTLVKQALLQLAQADKLADGLKSTTAVAFGYDDPIAPAKIIRKFSKTNEALKFKMAAIDGIVYGDDKLVMLSEMLSKTENIGRTAGLINNVVSSVPMVVNAVMRNLVSVLDQVAKQKQ</sequence>
<feature type="chain" id="PRO_1000120934" description="Large ribosomal subunit protein uL10">
    <location>
        <begin position="1"/>
        <end position="172"/>
    </location>
</feature>
<accession>B3EER0</accession>
<organism>
    <name type="scientific">Chlorobium limicola (strain DSM 245 / NBRC 103803 / 6330)</name>
    <dbReference type="NCBI Taxonomy" id="290315"/>
    <lineage>
        <taxon>Bacteria</taxon>
        <taxon>Pseudomonadati</taxon>
        <taxon>Chlorobiota</taxon>
        <taxon>Chlorobiia</taxon>
        <taxon>Chlorobiales</taxon>
        <taxon>Chlorobiaceae</taxon>
        <taxon>Chlorobium/Pelodictyon group</taxon>
        <taxon>Chlorobium</taxon>
    </lineage>
</organism>
<evidence type="ECO:0000255" key="1">
    <source>
        <dbReference type="HAMAP-Rule" id="MF_00362"/>
    </source>
</evidence>
<evidence type="ECO:0000305" key="2"/>
<dbReference type="EMBL" id="CP001097">
    <property type="protein sequence ID" value="ACD89293.1"/>
    <property type="molecule type" value="Genomic_DNA"/>
</dbReference>
<dbReference type="RefSeq" id="WP_012465174.1">
    <property type="nucleotide sequence ID" value="NC_010803.1"/>
</dbReference>
<dbReference type="SMR" id="B3EER0"/>
<dbReference type="STRING" id="290315.Clim_0194"/>
<dbReference type="KEGG" id="cli:Clim_0194"/>
<dbReference type="eggNOG" id="COG0244">
    <property type="taxonomic scope" value="Bacteria"/>
</dbReference>
<dbReference type="HOGENOM" id="CLU_092227_2_1_10"/>
<dbReference type="OrthoDB" id="1523686at2"/>
<dbReference type="Proteomes" id="UP000008841">
    <property type="component" value="Chromosome"/>
</dbReference>
<dbReference type="GO" id="GO:0015934">
    <property type="term" value="C:large ribosomal subunit"/>
    <property type="evidence" value="ECO:0007669"/>
    <property type="project" value="InterPro"/>
</dbReference>
<dbReference type="GO" id="GO:0070180">
    <property type="term" value="F:large ribosomal subunit rRNA binding"/>
    <property type="evidence" value="ECO:0007669"/>
    <property type="project" value="UniProtKB-UniRule"/>
</dbReference>
<dbReference type="GO" id="GO:0003735">
    <property type="term" value="F:structural constituent of ribosome"/>
    <property type="evidence" value="ECO:0007669"/>
    <property type="project" value="InterPro"/>
</dbReference>
<dbReference type="GO" id="GO:0006412">
    <property type="term" value="P:translation"/>
    <property type="evidence" value="ECO:0007669"/>
    <property type="project" value="UniProtKB-UniRule"/>
</dbReference>
<dbReference type="CDD" id="cd05797">
    <property type="entry name" value="Ribosomal_L10"/>
    <property type="match status" value="1"/>
</dbReference>
<dbReference type="Gene3D" id="3.30.70.1730">
    <property type="match status" value="1"/>
</dbReference>
<dbReference type="Gene3D" id="6.10.250.290">
    <property type="match status" value="1"/>
</dbReference>
<dbReference type="HAMAP" id="MF_00362">
    <property type="entry name" value="Ribosomal_uL10"/>
    <property type="match status" value="1"/>
</dbReference>
<dbReference type="InterPro" id="IPR001790">
    <property type="entry name" value="Ribosomal_uL10"/>
</dbReference>
<dbReference type="InterPro" id="IPR043141">
    <property type="entry name" value="Ribosomal_uL10-like_sf"/>
</dbReference>
<dbReference type="InterPro" id="IPR022973">
    <property type="entry name" value="Ribosomal_uL10_bac"/>
</dbReference>
<dbReference type="InterPro" id="IPR047865">
    <property type="entry name" value="Ribosomal_uL10_bac_type"/>
</dbReference>
<dbReference type="InterPro" id="IPR002363">
    <property type="entry name" value="Ribosomal_uL10_CS_bac"/>
</dbReference>
<dbReference type="NCBIfam" id="NF000955">
    <property type="entry name" value="PRK00099.1-1"/>
    <property type="match status" value="1"/>
</dbReference>
<dbReference type="PANTHER" id="PTHR11560">
    <property type="entry name" value="39S RIBOSOMAL PROTEIN L10, MITOCHONDRIAL"/>
    <property type="match status" value="1"/>
</dbReference>
<dbReference type="Pfam" id="PF00466">
    <property type="entry name" value="Ribosomal_L10"/>
    <property type="match status" value="1"/>
</dbReference>
<dbReference type="SUPFAM" id="SSF160369">
    <property type="entry name" value="Ribosomal protein L10-like"/>
    <property type="match status" value="1"/>
</dbReference>
<dbReference type="PROSITE" id="PS01109">
    <property type="entry name" value="RIBOSOMAL_L10"/>
    <property type="match status" value="1"/>
</dbReference>